<proteinExistence type="inferred from homology"/>
<sequence length="440" mass="46378">MKPLTSLLLSAALSAAAPHPASPQAPLADIPSIVGETRTEFSQNSLDDVVNASPLLSFHRDLVSIESISGNEGAAGAFVADFLASHNFTVIKQPVTTESDARFNIFAIPESQYHSLDESHSSHSPQILLTSHIDTVPPFIPYSLHRDANDTDDRNILIAGRGTVDAKGSVAAQIFAALDILAAQPSAPLGLLFVVGEETGGDGMKAFSQSTHLNPSPSRFHTVIFGEPTELALVAGHKGMLGFEVAAHGHAAHSGYPWLGESAISAILPALARVDQLGDIPVEEGGLPASDKYGRTTVNIGRMEGGVATNVVPSKARAGVAVRLAAGTHDEAREVVLKAVRDVTGGDDRVVVNFSLEGYGPQDLDTDVPGFNITTVNYGTDVPNLQLHPRPDGKVRRYLYGPGTIHVAHGDNEALTVAQLEEAVRGYKKLIQAALDRSAS</sequence>
<protein>
    <recommendedName>
        <fullName>Probable carboxypeptidase AFUB_072730</fullName>
        <ecNumber>3.4.17.-</ecNumber>
    </recommendedName>
    <alternativeName>
        <fullName>Peptidase M20 domain-containing protein AFUB_072730</fullName>
    </alternativeName>
</protein>
<evidence type="ECO:0000250" key="1"/>
<evidence type="ECO:0000255" key="2"/>
<evidence type="ECO:0000305" key="3"/>
<keyword id="KW-0325">Glycoprotein</keyword>
<keyword id="KW-0378">Hydrolase</keyword>
<keyword id="KW-0479">Metal-binding</keyword>
<keyword id="KW-0645">Protease</keyword>
<keyword id="KW-0964">Secreted</keyword>
<keyword id="KW-0732">Signal</keyword>
<keyword id="KW-0862">Zinc</keyword>
<accession>B0Y766</accession>
<dbReference type="EC" id="3.4.17.-"/>
<dbReference type="EMBL" id="DS499599">
    <property type="protein sequence ID" value="EDP49247.1"/>
    <property type="molecule type" value="Genomic_DNA"/>
</dbReference>
<dbReference type="SMR" id="B0Y766"/>
<dbReference type="EnsemblFungi" id="EDP49247">
    <property type="protein sequence ID" value="EDP49247"/>
    <property type="gene ID" value="AFUB_072730"/>
</dbReference>
<dbReference type="VEuPathDB" id="FungiDB:AFUB_072730"/>
<dbReference type="HOGENOM" id="CLU_021802_3_0_1"/>
<dbReference type="OrthoDB" id="96220at5052"/>
<dbReference type="PhylomeDB" id="B0Y766"/>
<dbReference type="Proteomes" id="UP000001699">
    <property type="component" value="Unassembled WGS sequence"/>
</dbReference>
<dbReference type="GO" id="GO:0005576">
    <property type="term" value="C:extracellular region"/>
    <property type="evidence" value="ECO:0007669"/>
    <property type="project" value="UniProtKB-SubCell"/>
</dbReference>
<dbReference type="GO" id="GO:0046872">
    <property type="term" value="F:metal ion binding"/>
    <property type="evidence" value="ECO:0007669"/>
    <property type="project" value="UniProtKB-KW"/>
</dbReference>
<dbReference type="GO" id="GO:0008233">
    <property type="term" value="F:peptidase activity"/>
    <property type="evidence" value="ECO:0007669"/>
    <property type="project" value="UniProtKB-KW"/>
</dbReference>
<dbReference type="GO" id="GO:0006508">
    <property type="term" value="P:proteolysis"/>
    <property type="evidence" value="ECO:0007669"/>
    <property type="project" value="UniProtKB-KW"/>
</dbReference>
<dbReference type="CDD" id="cd05652">
    <property type="entry name" value="M20_ArgE_DapE-like_fungal"/>
    <property type="match status" value="1"/>
</dbReference>
<dbReference type="Gene3D" id="3.30.70.360">
    <property type="match status" value="1"/>
</dbReference>
<dbReference type="Gene3D" id="3.40.630.10">
    <property type="entry name" value="Zn peptidases"/>
    <property type="match status" value="1"/>
</dbReference>
<dbReference type="InterPro" id="IPR001261">
    <property type="entry name" value="ArgE/DapE_CS"/>
</dbReference>
<dbReference type="InterPro" id="IPR036264">
    <property type="entry name" value="Bact_exopeptidase_dim_dom"/>
</dbReference>
<dbReference type="InterPro" id="IPR002933">
    <property type="entry name" value="Peptidase_M20"/>
</dbReference>
<dbReference type="InterPro" id="IPR011650">
    <property type="entry name" value="Peptidase_M20_dimer"/>
</dbReference>
<dbReference type="InterPro" id="IPR050072">
    <property type="entry name" value="Peptidase_M20A"/>
</dbReference>
<dbReference type="PANTHER" id="PTHR43808">
    <property type="entry name" value="ACETYLORNITHINE DEACETYLASE"/>
    <property type="match status" value="1"/>
</dbReference>
<dbReference type="PANTHER" id="PTHR43808:SF8">
    <property type="entry name" value="PEPTIDASE M20 DIMERISATION DOMAIN-CONTAINING PROTEIN"/>
    <property type="match status" value="1"/>
</dbReference>
<dbReference type="Pfam" id="PF07687">
    <property type="entry name" value="M20_dimer"/>
    <property type="match status" value="1"/>
</dbReference>
<dbReference type="Pfam" id="PF01546">
    <property type="entry name" value="Peptidase_M20"/>
    <property type="match status" value="1"/>
</dbReference>
<dbReference type="SUPFAM" id="SSF55031">
    <property type="entry name" value="Bacterial exopeptidase dimerisation domain"/>
    <property type="match status" value="1"/>
</dbReference>
<dbReference type="SUPFAM" id="SSF53187">
    <property type="entry name" value="Zn-dependent exopeptidases"/>
    <property type="match status" value="1"/>
</dbReference>
<dbReference type="PROSITE" id="PS00758">
    <property type="entry name" value="ARGE_DAPE_CPG2_1"/>
    <property type="match status" value="1"/>
</dbReference>
<dbReference type="PROSITE" id="PS00759">
    <property type="entry name" value="ARGE_DAPE_CPG2_2"/>
    <property type="match status" value="1"/>
</dbReference>
<reference key="1">
    <citation type="journal article" date="2008" name="PLoS Genet.">
        <title>Genomic islands in the pathogenic filamentous fungus Aspergillus fumigatus.</title>
        <authorList>
            <person name="Fedorova N.D."/>
            <person name="Khaldi N."/>
            <person name="Joardar V.S."/>
            <person name="Maiti R."/>
            <person name="Amedeo P."/>
            <person name="Anderson M.J."/>
            <person name="Crabtree J."/>
            <person name="Silva J.C."/>
            <person name="Badger J.H."/>
            <person name="Albarraq A."/>
            <person name="Angiuoli S."/>
            <person name="Bussey H."/>
            <person name="Bowyer P."/>
            <person name="Cotty P.J."/>
            <person name="Dyer P.S."/>
            <person name="Egan A."/>
            <person name="Galens K."/>
            <person name="Fraser-Liggett C.M."/>
            <person name="Haas B.J."/>
            <person name="Inman J.M."/>
            <person name="Kent R."/>
            <person name="Lemieux S."/>
            <person name="Malavazi I."/>
            <person name="Orvis J."/>
            <person name="Roemer T."/>
            <person name="Ronning C.M."/>
            <person name="Sundaram J.P."/>
            <person name="Sutton G."/>
            <person name="Turner G."/>
            <person name="Venter J.C."/>
            <person name="White O.R."/>
            <person name="Whitty B.R."/>
            <person name="Youngman P."/>
            <person name="Wolfe K.H."/>
            <person name="Goldman G.H."/>
            <person name="Wortman J.R."/>
            <person name="Jiang B."/>
            <person name="Denning D.W."/>
            <person name="Nierman W.C."/>
        </authorList>
    </citation>
    <scope>NUCLEOTIDE SEQUENCE [LARGE SCALE GENOMIC DNA]</scope>
    <source>
        <strain>CBS 144.89 / FGSC A1163 / CEA10</strain>
    </source>
</reference>
<organism>
    <name type="scientific">Aspergillus fumigatus (strain CBS 144.89 / FGSC A1163 / CEA10)</name>
    <name type="common">Neosartorya fumigata</name>
    <dbReference type="NCBI Taxonomy" id="451804"/>
    <lineage>
        <taxon>Eukaryota</taxon>
        <taxon>Fungi</taxon>
        <taxon>Dikarya</taxon>
        <taxon>Ascomycota</taxon>
        <taxon>Pezizomycotina</taxon>
        <taxon>Eurotiomycetes</taxon>
        <taxon>Eurotiomycetidae</taxon>
        <taxon>Eurotiales</taxon>
        <taxon>Aspergillaceae</taxon>
        <taxon>Aspergillus</taxon>
        <taxon>Aspergillus subgen. Fumigati</taxon>
    </lineage>
</organism>
<name>P20D1_ASPFC</name>
<gene>
    <name type="ORF">AFUB_072730</name>
</gene>
<feature type="signal peptide" evidence="2">
    <location>
        <begin position="1"/>
        <end position="16"/>
    </location>
</feature>
<feature type="chain" id="PRO_0000411228" description="Probable carboxypeptidase AFUB_072730">
    <location>
        <begin position="17"/>
        <end position="440"/>
    </location>
</feature>
<feature type="active site" description="Proton acceptor" evidence="1">
    <location>
        <position position="197"/>
    </location>
</feature>
<feature type="binding site" evidence="1">
    <location>
        <position position="165"/>
    </location>
    <ligand>
        <name>Zn(2+)</name>
        <dbReference type="ChEBI" id="CHEBI:29105"/>
        <label>1</label>
    </ligand>
</feature>
<feature type="binding site" evidence="1">
    <location>
        <position position="165"/>
    </location>
    <ligand>
        <name>Zn(2+)</name>
        <dbReference type="ChEBI" id="CHEBI:29105"/>
        <label>2</label>
    </ligand>
</feature>
<feature type="binding site" evidence="1">
    <location>
        <position position="198"/>
    </location>
    <ligand>
        <name>Zn(2+)</name>
        <dbReference type="ChEBI" id="CHEBI:29105"/>
        <label>1</label>
    </ligand>
</feature>
<feature type="glycosylation site" description="N-linked (GlcNAc...) asparagine" evidence="2">
    <location>
        <position position="87"/>
    </location>
</feature>
<feature type="glycosylation site" description="N-linked (GlcNAc...) asparagine" evidence="2">
    <location>
        <position position="149"/>
    </location>
</feature>
<feature type="glycosylation site" description="N-linked (GlcNAc...) asparagine" evidence="2">
    <location>
        <position position="353"/>
    </location>
</feature>
<feature type="glycosylation site" description="N-linked (GlcNAc...) asparagine" evidence="2">
    <location>
        <position position="372"/>
    </location>
</feature>
<comment type="cofactor">
    <cofactor evidence="1">
        <name>Zn(2+)</name>
        <dbReference type="ChEBI" id="CHEBI:29105"/>
    </cofactor>
    <text evidence="1">Binds 2 Zn(2+) ions per subunit.</text>
</comment>
<comment type="subcellular location">
    <subcellularLocation>
        <location evidence="3">Secreted</location>
    </subcellularLocation>
</comment>
<comment type="similarity">
    <text evidence="3">Belongs to the peptidase M20A family.</text>
</comment>